<sequence>MDFRSLIASSVAQDKDREFEVRPSSRGSWSCKEVDEFDALSIEYEPKPIEKYPAKLHARQVKKYLGLQEGLIYLPGLPSFNYEDSDMQPAFRQRRYFYYLTGVNFPDCIVTYSIHRDQLWLWIPPPNSGRSVIYNGSRPTAKEIMAKYDLDHVETLPHLDSYLTWYAHTEPGKIHVLHDYQTPNNVELQITRKNGSQSIMSESPFDSTKLEEAMNTARAIKSPYELKMIRKASAITAQGHINVLRGLRYLSNEAEIEAIFTATCIARQAKTQAYGVIAGSGENASTLHYMANNEPLKGRQLLCLDAGCEWDCYASDVTRTVPISGEYTEEAQAIYDLVAKMQDECIEMLKPGANYRDVHMHAHKVALRGLMELGLVEGGTFNELYMAGVSVAFFPHGLGHYVGLEVHDVGPGGMIITNRLFDFNRKPADWTDAYFQILSDSGINSGGGAILSKDMVVTVEPGIYFSRYALEEVYLKSPKYAKYINKELLQKYYPVGGVRIEDDLLITEDGYENLTTAPKGEAALKIINEGREQEEKRVVCEKAAESKRKQKKTWFW</sequence>
<evidence type="ECO:0000250" key="1"/>
<evidence type="ECO:0000305" key="2"/>
<dbReference type="EC" id="3.4.11.9"/>
<dbReference type="EMBL" id="CH476629">
    <property type="protein sequence ID" value="EDO04465.1"/>
    <property type="molecule type" value="Genomic_DNA"/>
</dbReference>
<dbReference type="RefSeq" id="XP_001591502.1">
    <property type="nucleotide sequence ID" value="XM_001591452.1"/>
</dbReference>
<dbReference type="SMR" id="A7ENP9"/>
<dbReference type="STRING" id="665079.A7ENP9"/>
<dbReference type="EnsemblFungi" id="EDO04465">
    <property type="protein sequence ID" value="EDO04465"/>
    <property type="gene ID" value="SS1G_06948"/>
</dbReference>
<dbReference type="GeneID" id="5488121"/>
<dbReference type="KEGG" id="ssl:SS1G_06948"/>
<dbReference type="VEuPathDB" id="FungiDB:sscle_06g052960"/>
<dbReference type="eggNOG" id="KOG2737">
    <property type="taxonomic scope" value="Eukaryota"/>
</dbReference>
<dbReference type="HOGENOM" id="CLU_017266_1_2_1"/>
<dbReference type="InParanoid" id="A7ENP9"/>
<dbReference type="OMA" id="YELRMIR"/>
<dbReference type="OrthoDB" id="10261878at2759"/>
<dbReference type="Proteomes" id="UP000001312">
    <property type="component" value="Unassembled WGS sequence"/>
</dbReference>
<dbReference type="GO" id="GO:0030145">
    <property type="term" value="F:manganese ion binding"/>
    <property type="evidence" value="ECO:0007669"/>
    <property type="project" value="InterPro"/>
</dbReference>
<dbReference type="GO" id="GO:0070006">
    <property type="term" value="F:metalloaminopeptidase activity"/>
    <property type="evidence" value="ECO:0007669"/>
    <property type="project" value="InterPro"/>
</dbReference>
<dbReference type="GO" id="GO:0008233">
    <property type="term" value="F:peptidase activity"/>
    <property type="evidence" value="ECO:0000318"/>
    <property type="project" value="GO_Central"/>
</dbReference>
<dbReference type="GO" id="GO:0006508">
    <property type="term" value="P:proteolysis"/>
    <property type="evidence" value="ECO:0000318"/>
    <property type="project" value="GO_Central"/>
</dbReference>
<dbReference type="CDD" id="cd01087">
    <property type="entry name" value="Prolidase"/>
    <property type="match status" value="1"/>
</dbReference>
<dbReference type="Gene3D" id="3.90.230.10">
    <property type="entry name" value="Creatinase/methionine aminopeptidase superfamily"/>
    <property type="match status" value="1"/>
</dbReference>
<dbReference type="Gene3D" id="3.40.350.10">
    <property type="entry name" value="Creatinase/prolidase N-terminal domain"/>
    <property type="match status" value="1"/>
</dbReference>
<dbReference type="InterPro" id="IPR007865">
    <property type="entry name" value="Aminopep_P_N"/>
</dbReference>
<dbReference type="InterPro" id="IPR029149">
    <property type="entry name" value="Creatin/AminoP/Spt16_N"/>
</dbReference>
<dbReference type="InterPro" id="IPR036005">
    <property type="entry name" value="Creatinase/aminopeptidase-like"/>
</dbReference>
<dbReference type="InterPro" id="IPR000994">
    <property type="entry name" value="Pept_M24"/>
</dbReference>
<dbReference type="InterPro" id="IPR001131">
    <property type="entry name" value="Peptidase_M24B_aminopep-P_CS"/>
</dbReference>
<dbReference type="InterPro" id="IPR052433">
    <property type="entry name" value="X-Pro_dipept-like"/>
</dbReference>
<dbReference type="PANTHER" id="PTHR43226">
    <property type="entry name" value="XAA-PRO AMINOPEPTIDASE 3"/>
    <property type="match status" value="1"/>
</dbReference>
<dbReference type="PANTHER" id="PTHR43226:SF3">
    <property type="entry name" value="XAA-PRO AMINOPEPTIDASE AN0832-RELATED"/>
    <property type="match status" value="1"/>
</dbReference>
<dbReference type="Pfam" id="PF05195">
    <property type="entry name" value="AMP_N"/>
    <property type="match status" value="1"/>
</dbReference>
<dbReference type="Pfam" id="PF00557">
    <property type="entry name" value="Peptidase_M24"/>
    <property type="match status" value="1"/>
</dbReference>
<dbReference type="SMART" id="SM01011">
    <property type="entry name" value="AMP_N"/>
    <property type="match status" value="1"/>
</dbReference>
<dbReference type="SUPFAM" id="SSF55920">
    <property type="entry name" value="Creatinase/aminopeptidase"/>
    <property type="match status" value="1"/>
</dbReference>
<dbReference type="SUPFAM" id="SSF53092">
    <property type="entry name" value="Creatinase/prolidase N-terminal domain"/>
    <property type="match status" value="1"/>
</dbReference>
<dbReference type="PROSITE" id="PS00491">
    <property type="entry name" value="PROLINE_PEPTIDASE"/>
    <property type="match status" value="1"/>
</dbReference>
<keyword id="KW-0031">Aminopeptidase</keyword>
<keyword id="KW-0378">Hydrolase</keyword>
<keyword id="KW-0464">Manganese</keyword>
<keyword id="KW-0479">Metal-binding</keyword>
<keyword id="KW-0482">Metalloprotease</keyword>
<keyword id="KW-0645">Protease</keyword>
<keyword id="KW-1185">Reference proteome</keyword>
<gene>
    <name type="ORF">SS1G_06948</name>
</gene>
<protein>
    <recommendedName>
        <fullName>Probable Xaa-Pro aminopeptidase SS1G_06948</fullName>
        <ecNumber>3.4.11.9</ecNumber>
    </recommendedName>
    <alternativeName>
        <fullName>Aminoacylproline aminopeptidase</fullName>
    </alternativeName>
    <alternativeName>
        <fullName>Prolidase</fullName>
    </alternativeName>
</protein>
<feature type="chain" id="PRO_0000411851" description="Probable Xaa-Pro aminopeptidase SS1G_06948">
    <location>
        <begin position="1"/>
        <end position="556"/>
    </location>
</feature>
<feature type="binding site" evidence="1">
    <location>
        <position position="305"/>
    </location>
    <ligand>
        <name>Mn(2+)</name>
        <dbReference type="ChEBI" id="CHEBI:29035"/>
        <label>2</label>
    </ligand>
</feature>
<feature type="binding site" evidence="1">
    <location>
        <position position="316"/>
    </location>
    <ligand>
        <name>Mn(2+)</name>
        <dbReference type="ChEBI" id="CHEBI:29035"/>
        <label>1</label>
    </ligand>
</feature>
<feature type="binding site" evidence="1">
    <location>
        <position position="316"/>
    </location>
    <ligand>
        <name>Mn(2+)</name>
        <dbReference type="ChEBI" id="CHEBI:29035"/>
        <label>2</label>
    </ligand>
</feature>
<feature type="binding site" evidence="1">
    <location>
        <position position="460"/>
    </location>
    <ligand>
        <name>Mn(2+)</name>
        <dbReference type="ChEBI" id="CHEBI:29035"/>
        <label>1</label>
    </ligand>
</feature>
<feature type="binding site" evidence="1">
    <location>
        <position position="501"/>
    </location>
    <ligand>
        <name>Mn(2+)</name>
        <dbReference type="ChEBI" id="CHEBI:29035"/>
        <label>1</label>
    </ligand>
</feature>
<feature type="binding site" evidence="1">
    <location>
        <position position="501"/>
    </location>
    <ligand>
        <name>Mn(2+)</name>
        <dbReference type="ChEBI" id="CHEBI:29035"/>
        <label>2</label>
    </ligand>
</feature>
<name>AMPP2_SCLS1</name>
<accession>A7ENP9</accession>
<organism>
    <name type="scientific">Sclerotinia sclerotiorum (strain ATCC 18683 / 1980 / Ss-1)</name>
    <name type="common">White mold</name>
    <name type="synonym">Whetzelinia sclerotiorum</name>
    <dbReference type="NCBI Taxonomy" id="665079"/>
    <lineage>
        <taxon>Eukaryota</taxon>
        <taxon>Fungi</taxon>
        <taxon>Dikarya</taxon>
        <taxon>Ascomycota</taxon>
        <taxon>Pezizomycotina</taxon>
        <taxon>Leotiomycetes</taxon>
        <taxon>Helotiales</taxon>
        <taxon>Sclerotiniaceae</taxon>
        <taxon>Sclerotinia</taxon>
    </lineage>
</organism>
<proteinExistence type="inferred from homology"/>
<reference key="1">
    <citation type="journal article" date="2011" name="PLoS Genet.">
        <title>Genomic analysis of the necrotrophic fungal pathogens Sclerotinia sclerotiorum and Botrytis cinerea.</title>
        <authorList>
            <person name="Amselem J."/>
            <person name="Cuomo C.A."/>
            <person name="van Kan J.A.L."/>
            <person name="Viaud M."/>
            <person name="Benito E.P."/>
            <person name="Couloux A."/>
            <person name="Coutinho P.M."/>
            <person name="de Vries R.P."/>
            <person name="Dyer P.S."/>
            <person name="Fillinger S."/>
            <person name="Fournier E."/>
            <person name="Gout L."/>
            <person name="Hahn M."/>
            <person name="Kohn L."/>
            <person name="Lapalu N."/>
            <person name="Plummer K.M."/>
            <person name="Pradier J.-M."/>
            <person name="Quevillon E."/>
            <person name="Sharon A."/>
            <person name="Simon A."/>
            <person name="ten Have A."/>
            <person name="Tudzynski B."/>
            <person name="Tudzynski P."/>
            <person name="Wincker P."/>
            <person name="Andrew M."/>
            <person name="Anthouard V."/>
            <person name="Beever R.E."/>
            <person name="Beffa R."/>
            <person name="Benoit I."/>
            <person name="Bouzid O."/>
            <person name="Brault B."/>
            <person name="Chen Z."/>
            <person name="Choquer M."/>
            <person name="Collemare J."/>
            <person name="Cotton P."/>
            <person name="Danchin E.G."/>
            <person name="Da Silva C."/>
            <person name="Gautier A."/>
            <person name="Giraud C."/>
            <person name="Giraud T."/>
            <person name="Gonzalez C."/>
            <person name="Grossetete S."/>
            <person name="Gueldener U."/>
            <person name="Henrissat B."/>
            <person name="Howlett B.J."/>
            <person name="Kodira C."/>
            <person name="Kretschmer M."/>
            <person name="Lappartient A."/>
            <person name="Leroch M."/>
            <person name="Levis C."/>
            <person name="Mauceli E."/>
            <person name="Neuveglise C."/>
            <person name="Oeser B."/>
            <person name="Pearson M."/>
            <person name="Poulain J."/>
            <person name="Poussereau N."/>
            <person name="Quesneville H."/>
            <person name="Rascle C."/>
            <person name="Schumacher J."/>
            <person name="Segurens B."/>
            <person name="Sexton A."/>
            <person name="Silva E."/>
            <person name="Sirven C."/>
            <person name="Soanes D.M."/>
            <person name="Talbot N.J."/>
            <person name="Templeton M."/>
            <person name="Yandava C."/>
            <person name="Yarden O."/>
            <person name="Zeng Q."/>
            <person name="Rollins J.A."/>
            <person name="Lebrun M.-H."/>
            <person name="Dickman M."/>
        </authorList>
    </citation>
    <scope>NUCLEOTIDE SEQUENCE [LARGE SCALE GENOMIC DNA]</scope>
    <source>
        <strain>ATCC 18683 / 1980 / Ss-1</strain>
    </source>
</reference>
<comment type="function">
    <text evidence="1">Catalyzes the removal of a penultimate prolyl residue from the N-termini of peptides.</text>
</comment>
<comment type="catalytic activity">
    <reaction>
        <text>Release of any N-terminal amino acid, including proline, that is linked to proline, even from a dipeptide or tripeptide.</text>
        <dbReference type="EC" id="3.4.11.9"/>
    </reaction>
</comment>
<comment type="cofactor">
    <cofactor evidence="1">
        <name>Mn(2+)</name>
        <dbReference type="ChEBI" id="CHEBI:29035"/>
    </cofactor>
    <text evidence="1">Binds 2 manganese ions per subunit.</text>
</comment>
<comment type="similarity">
    <text evidence="2">Belongs to the peptidase M24B family.</text>
</comment>